<proteinExistence type="inferred from homology"/>
<feature type="chain" id="PRO_1000136188" description="UPF0227 protein YcfP">
    <location>
        <begin position="1"/>
        <end position="180"/>
    </location>
</feature>
<gene>
    <name evidence="1" type="primary">ycfP</name>
    <name type="ordered locus">ECDH10B_1180</name>
</gene>
<reference key="1">
    <citation type="journal article" date="2008" name="J. Bacteriol.">
        <title>The complete genome sequence of Escherichia coli DH10B: insights into the biology of a laboratory workhorse.</title>
        <authorList>
            <person name="Durfee T."/>
            <person name="Nelson R."/>
            <person name="Baldwin S."/>
            <person name="Plunkett G. III"/>
            <person name="Burland V."/>
            <person name="Mau B."/>
            <person name="Petrosino J.F."/>
            <person name="Qin X."/>
            <person name="Muzny D.M."/>
            <person name="Ayele M."/>
            <person name="Gibbs R.A."/>
            <person name="Csorgo B."/>
            <person name="Posfai G."/>
            <person name="Weinstock G.M."/>
            <person name="Blattner F.R."/>
        </authorList>
    </citation>
    <scope>NUCLEOTIDE SEQUENCE [LARGE SCALE GENOMIC DNA]</scope>
    <source>
        <strain>K12 / DH10B</strain>
    </source>
</reference>
<name>YCFP_ECODH</name>
<organism>
    <name type="scientific">Escherichia coli (strain K12 / DH10B)</name>
    <dbReference type="NCBI Taxonomy" id="316385"/>
    <lineage>
        <taxon>Bacteria</taxon>
        <taxon>Pseudomonadati</taxon>
        <taxon>Pseudomonadota</taxon>
        <taxon>Gammaproteobacteria</taxon>
        <taxon>Enterobacterales</taxon>
        <taxon>Enterobacteriaceae</taxon>
        <taxon>Escherichia</taxon>
    </lineage>
</organism>
<evidence type="ECO:0000255" key="1">
    <source>
        <dbReference type="HAMAP-Rule" id="MF_01047"/>
    </source>
</evidence>
<protein>
    <recommendedName>
        <fullName evidence="1">UPF0227 protein YcfP</fullName>
    </recommendedName>
</protein>
<comment type="similarity">
    <text evidence="1">Belongs to the UPF0227 family.</text>
</comment>
<dbReference type="EMBL" id="CP000948">
    <property type="protein sequence ID" value="ACB02301.1"/>
    <property type="molecule type" value="Genomic_DNA"/>
</dbReference>
<dbReference type="RefSeq" id="WP_000587933.1">
    <property type="nucleotide sequence ID" value="NC_010473.1"/>
</dbReference>
<dbReference type="SMR" id="B1XA18"/>
<dbReference type="ESTHER" id="ecoli-ycfp">
    <property type="family name" value="abh_upf00227"/>
</dbReference>
<dbReference type="GeneID" id="93776300"/>
<dbReference type="KEGG" id="ecd:ECDH10B_1180"/>
<dbReference type="HOGENOM" id="CLU_128769_0_0_6"/>
<dbReference type="FunFam" id="3.40.50.1820:FF:000007">
    <property type="entry name" value="UPF0227 protein YcfP"/>
    <property type="match status" value="1"/>
</dbReference>
<dbReference type="Gene3D" id="3.40.50.1820">
    <property type="entry name" value="alpha/beta hydrolase"/>
    <property type="match status" value="1"/>
</dbReference>
<dbReference type="HAMAP" id="MF_01047">
    <property type="entry name" value="UPF0227"/>
    <property type="match status" value="1"/>
</dbReference>
<dbReference type="InterPro" id="IPR029058">
    <property type="entry name" value="AB_hydrolase_fold"/>
</dbReference>
<dbReference type="InterPro" id="IPR022987">
    <property type="entry name" value="UPF0227"/>
</dbReference>
<dbReference type="InterPro" id="IPR008886">
    <property type="entry name" value="UPF0227/Esterase_YqiA"/>
</dbReference>
<dbReference type="NCBIfam" id="NF003431">
    <property type="entry name" value="PRK04940.1"/>
    <property type="match status" value="1"/>
</dbReference>
<dbReference type="PANTHER" id="PTHR35602">
    <property type="entry name" value="ESTERASE YQIA-RELATED"/>
    <property type="match status" value="1"/>
</dbReference>
<dbReference type="PANTHER" id="PTHR35602:SF2">
    <property type="entry name" value="UPF0227 PROTEIN YCFP"/>
    <property type="match status" value="1"/>
</dbReference>
<dbReference type="Pfam" id="PF05728">
    <property type="entry name" value="UPF0227"/>
    <property type="match status" value="1"/>
</dbReference>
<dbReference type="SUPFAM" id="SSF53474">
    <property type="entry name" value="alpha/beta-Hydrolases"/>
    <property type="match status" value="1"/>
</dbReference>
<accession>B1XA18</accession>
<sequence>MIIYLHGFDSNSPGNHEKVLQLQFIDPDVRLISYSTRHPKHDMQHLLKEVDKMLQLNVDERPLICGVGLGGYWAERIGFLCDIRQVIFNPNLFPYENMEGKIDRPEEYADIATKCVTNFREKNRDRCLVILSRNDEALNSQRTSEELHHYYEIVWDEEQTHKFKNISPHLQRIKAFKTLG</sequence>